<dbReference type="EC" id="2.7.7.6"/>
<dbReference type="EMBL" id="AY047483">
    <property type="protein sequence ID" value="AAL83360.1"/>
    <property type="molecule type" value="Genomic_DNA"/>
</dbReference>
<dbReference type="SMR" id="Q8SL94"/>
<dbReference type="GO" id="GO:0009507">
    <property type="term" value="C:chloroplast"/>
    <property type="evidence" value="ECO:0007669"/>
    <property type="project" value="UniProtKB-SubCell"/>
</dbReference>
<dbReference type="GO" id="GO:0000428">
    <property type="term" value="C:DNA-directed RNA polymerase complex"/>
    <property type="evidence" value="ECO:0007669"/>
    <property type="project" value="UniProtKB-KW"/>
</dbReference>
<dbReference type="GO" id="GO:0005739">
    <property type="term" value="C:mitochondrion"/>
    <property type="evidence" value="ECO:0007669"/>
    <property type="project" value="GOC"/>
</dbReference>
<dbReference type="GO" id="GO:0003899">
    <property type="term" value="F:DNA-directed RNA polymerase activity"/>
    <property type="evidence" value="ECO:0007669"/>
    <property type="project" value="UniProtKB-EC"/>
</dbReference>
<dbReference type="GO" id="GO:0046983">
    <property type="term" value="F:protein dimerization activity"/>
    <property type="evidence" value="ECO:0007669"/>
    <property type="project" value="InterPro"/>
</dbReference>
<dbReference type="GO" id="GO:0006351">
    <property type="term" value="P:DNA-templated transcription"/>
    <property type="evidence" value="ECO:0007669"/>
    <property type="project" value="InterPro"/>
</dbReference>
<dbReference type="Gene3D" id="2.170.120.12">
    <property type="entry name" value="DNA-directed RNA polymerase, insert domain"/>
    <property type="match status" value="1"/>
</dbReference>
<dbReference type="Gene3D" id="3.30.1360.10">
    <property type="entry name" value="RNA polymerase, RBP11-like subunit"/>
    <property type="match status" value="1"/>
</dbReference>
<dbReference type="InterPro" id="IPR036603">
    <property type="entry name" value="RBP11-like"/>
</dbReference>
<dbReference type="InterPro" id="IPR036643">
    <property type="entry name" value="RNApol_insert_sf"/>
</dbReference>
<dbReference type="SUPFAM" id="SSF56553">
    <property type="entry name" value="Insert subdomain of RNA polymerase alpha subunit"/>
    <property type="match status" value="1"/>
</dbReference>
<sequence length="207" mass="24508">MKLLKISILRQSTFKNKKYNLFKIKTNRDFNPLVIGTKIRRNLIKETKGTKITQASLFVLNKKSKEKLYHSLNEFTNIEEISEKTNEIIKNLERLKIKLVNKNLKKKIICITLTKENSFFKEIYKTIKISNLNQKICTIKSHNVEIKLLLKIEKEKGIKFNPIETINFIIPKKNNENNSSLFLETIRNDQTFTELYQSLKLIYNQQI</sequence>
<feature type="chain" id="PRO_0000175505" description="DNA-directed RNA polymerase subunit alpha">
    <location>
        <begin position="1"/>
        <end position="207"/>
    </location>
</feature>
<name>RPOA_EUGAN</name>
<comment type="function">
    <text evidence="1">DNA-dependent RNA polymerase catalyzes the transcription of DNA into RNA using the four ribonucleoside triphosphates as substrates.</text>
</comment>
<comment type="catalytic activity">
    <reaction>
        <text>RNA(n) + a ribonucleoside 5'-triphosphate = RNA(n+1) + diphosphate</text>
        <dbReference type="Rhea" id="RHEA:21248"/>
        <dbReference type="Rhea" id="RHEA-COMP:14527"/>
        <dbReference type="Rhea" id="RHEA-COMP:17342"/>
        <dbReference type="ChEBI" id="CHEBI:33019"/>
        <dbReference type="ChEBI" id="CHEBI:61557"/>
        <dbReference type="ChEBI" id="CHEBI:140395"/>
        <dbReference type="EC" id="2.7.7.6"/>
    </reaction>
</comment>
<comment type="subunit">
    <text evidence="1">In plastids the minimal PEP RNA polymerase catalytic core is composed of four subunits: alpha, beta, beta', and beta''. When a (nuclear-encoded) sigma factor is associated with the core the holoenzyme is formed, which can initiate transcription (By similarity).</text>
</comment>
<comment type="subcellular location">
    <subcellularLocation>
        <location>Plastid</location>
        <location>Chloroplast</location>
    </subcellularLocation>
</comment>
<comment type="similarity">
    <text evidence="2">Belongs to the RNA polymerase alpha chain family.</text>
</comment>
<comment type="caution">
    <text evidence="2">The C-terminal domain thought to be required for interaction with some regulatory factors is missing from this protein.</text>
</comment>
<evidence type="ECO:0000250" key="1"/>
<evidence type="ECO:0000305" key="2"/>
<geneLocation type="chloroplast"/>
<keyword id="KW-0150">Chloroplast</keyword>
<keyword id="KW-0240">DNA-directed RNA polymerase</keyword>
<keyword id="KW-0548">Nucleotidyltransferase</keyword>
<keyword id="KW-0934">Plastid</keyword>
<keyword id="KW-0804">Transcription</keyword>
<keyword id="KW-0808">Transferase</keyword>
<accession>Q8SL94</accession>
<organism>
    <name type="scientific">Euglena anabaena</name>
    <name type="common">Euglenaria anabaena</name>
    <dbReference type="NCBI Taxonomy" id="38273"/>
    <lineage>
        <taxon>Eukaryota</taxon>
        <taxon>Discoba</taxon>
        <taxon>Euglenozoa</taxon>
        <taxon>Euglenida</taxon>
        <taxon>Spirocuta</taxon>
        <taxon>Euglenophyceae</taxon>
        <taxon>Euglenales</taxon>
        <taxon>Euglenaceae</taxon>
        <taxon>Euglenaria</taxon>
    </lineage>
</organism>
<gene>
    <name type="primary">rpoA</name>
</gene>
<reference key="1">
    <citation type="journal article" date="2002" name="Nucleic Acids Res.">
        <title>Identification and comparative analysis of the chloroplast alpha-subunit gene of DNA-dependent RNA polymerase from seven Euglena species.</title>
        <authorList>
            <person name="Sheveleva E.V."/>
            <person name="Giordani N.V."/>
            <person name="Hallick R.B."/>
        </authorList>
    </citation>
    <scope>NUCLEOTIDE SEQUENCE [GENOMIC DNA]</scope>
    <source>
        <strain>UTEX 373</strain>
    </source>
</reference>
<proteinExistence type="inferred from homology"/>
<protein>
    <recommendedName>
        <fullName>DNA-directed RNA polymerase subunit alpha</fullName>
        <shortName>PEP</shortName>
        <ecNumber>2.7.7.6</ecNumber>
    </recommendedName>
    <alternativeName>
        <fullName>Plastid-encoded RNA polymerase subunit alpha</fullName>
        <shortName>RNA polymerase subunit alpha</shortName>
    </alternativeName>
</protein>